<evidence type="ECO:0000255" key="1">
    <source>
        <dbReference type="HAMAP-Rule" id="MF_00105"/>
    </source>
</evidence>
<proteinExistence type="inferred from homology"/>
<gene>
    <name evidence="1" type="primary">greA</name>
    <name type="ordered locus">BCc_237</name>
</gene>
<organism>
    <name type="scientific">Buchnera aphidicola subsp. Cinara cedri (strain Cc)</name>
    <dbReference type="NCBI Taxonomy" id="372461"/>
    <lineage>
        <taxon>Bacteria</taxon>
        <taxon>Pseudomonadati</taxon>
        <taxon>Pseudomonadota</taxon>
        <taxon>Gammaproteobacteria</taxon>
        <taxon>Enterobacterales</taxon>
        <taxon>Erwiniaceae</taxon>
        <taxon>Buchnera</taxon>
    </lineage>
</organism>
<accession>Q057J4</accession>
<keyword id="KW-0238">DNA-binding</keyword>
<keyword id="KW-1185">Reference proteome</keyword>
<keyword id="KW-0804">Transcription</keyword>
<keyword id="KW-0805">Transcription regulation</keyword>
<sequence length="159" mass="18234">MFNKIPMTLRGFNKLKSELKKLKYITRPCIVKAIANARQLGDLKENAEYHSAREEQSFCENRICEIENKLLRAQIIDITKIPFKGIVIFGSTVTVLQISTSNIFVYTIVGDDEANYKEFSISIHSPMSRALIGKKKNDIIKVNTPTGYIKYIIKKIEYI</sequence>
<name>GREA_BUCCC</name>
<feature type="chain" id="PRO_1000094152" description="Transcription elongation factor GreA">
    <location>
        <begin position="1"/>
        <end position="159"/>
    </location>
</feature>
<reference key="1">
    <citation type="journal article" date="2006" name="Science">
        <title>A small microbial genome: the end of a long symbiotic relationship?</title>
        <authorList>
            <person name="Perez-Brocal V."/>
            <person name="Gil R."/>
            <person name="Ramos S."/>
            <person name="Lamelas A."/>
            <person name="Postigo M."/>
            <person name="Michelena J.M."/>
            <person name="Silva F.J."/>
            <person name="Moya A."/>
            <person name="Latorre A."/>
        </authorList>
    </citation>
    <scope>NUCLEOTIDE SEQUENCE [LARGE SCALE GENOMIC DNA]</scope>
    <source>
        <strain>Cc</strain>
    </source>
</reference>
<comment type="function">
    <text evidence="1">Necessary for efficient RNA polymerase transcription elongation past template-encoded arresting sites. The arresting sites in DNA have the property of trapping a certain fraction of elongating RNA polymerases that pass through, resulting in locked ternary complexes. Cleavage of the nascent transcript by cleavage factors such as GreA or GreB allows the resumption of elongation from the new 3'terminus. GreA releases sequences of 2 to 3 nucleotides.</text>
</comment>
<comment type="similarity">
    <text evidence="1">Belongs to the GreA/GreB family.</text>
</comment>
<protein>
    <recommendedName>
        <fullName evidence="1">Transcription elongation factor GreA</fullName>
    </recommendedName>
    <alternativeName>
        <fullName evidence="1">Transcript cleavage factor GreA</fullName>
    </alternativeName>
</protein>
<dbReference type="EMBL" id="CP000263">
    <property type="protein sequence ID" value="ABJ90705.1"/>
    <property type="molecule type" value="Genomic_DNA"/>
</dbReference>
<dbReference type="RefSeq" id="WP_011672624.1">
    <property type="nucleotide sequence ID" value="NC_008513.1"/>
</dbReference>
<dbReference type="SMR" id="Q057J4"/>
<dbReference type="STRING" id="372461.BCc_237"/>
<dbReference type="KEGG" id="bcc:BCc_237"/>
<dbReference type="eggNOG" id="COG0782">
    <property type="taxonomic scope" value="Bacteria"/>
</dbReference>
<dbReference type="HOGENOM" id="CLU_101379_2_0_6"/>
<dbReference type="OrthoDB" id="9808774at2"/>
<dbReference type="Proteomes" id="UP000000669">
    <property type="component" value="Chromosome"/>
</dbReference>
<dbReference type="GO" id="GO:0003677">
    <property type="term" value="F:DNA binding"/>
    <property type="evidence" value="ECO:0007669"/>
    <property type="project" value="UniProtKB-UniRule"/>
</dbReference>
<dbReference type="GO" id="GO:0070063">
    <property type="term" value="F:RNA polymerase binding"/>
    <property type="evidence" value="ECO:0007669"/>
    <property type="project" value="InterPro"/>
</dbReference>
<dbReference type="GO" id="GO:0006354">
    <property type="term" value="P:DNA-templated transcription elongation"/>
    <property type="evidence" value="ECO:0007669"/>
    <property type="project" value="TreeGrafter"/>
</dbReference>
<dbReference type="GO" id="GO:0032784">
    <property type="term" value="P:regulation of DNA-templated transcription elongation"/>
    <property type="evidence" value="ECO:0007669"/>
    <property type="project" value="UniProtKB-UniRule"/>
</dbReference>
<dbReference type="FunFam" id="1.10.287.180:FF:000001">
    <property type="entry name" value="Transcription elongation factor GreA"/>
    <property type="match status" value="1"/>
</dbReference>
<dbReference type="FunFam" id="3.10.50.30:FF:000001">
    <property type="entry name" value="Transcription elongation factor GreA"/>
    <property type="match status" value="1"/>
</dbReference>
<dbReference type="Gene3D" id="3.10.50.30">
    <property type="entry name" value="Transcription elongation factor, GreA/GreB, C-terminal domain"/>
    <property type="match status" value="1"/>
</dbReference>
<dbReference type="Gene3D" id="1.10.287.180">
    <property type="entry name" value="Transcription elongation factor, GreA/GreB, N-terminal domain"/>
    <property type="match status" value="1"/>
</dbReference>
<dbReference type="HAMAP" id="MF_00105">
    <property type="entry name" value="GreA_GreB"/>
    <property type="match status" value="1"/>
</dbReference>
<dbReference type="InterPro" id="IPR036953">
    <property type="entry name" value="GreA/GreB_C_sf"/>
</dbReference>
<dbReference type="InterPro" id="IPR018151">
    <property type="entry name" value="TF_GreA/GreB_CS"/>
</dbReference>
<dbReference type="InterPro" id="IPR006359">
    <property type="entry name" value="Tscrpt_elong_fac_GreA"/>
</dbReference>
<dbReference type="InterPro" id="IPR028624">
    <property type="entry name" value="Tscrpt_elong_fac_GreA/B"/>
</dbReference>
<dbReference type="InterPro" id="IPR001437">
    <property type="entry name" value="Tscrpt_elong_fac_GreA/B_C"/>
</dbReference>
<dbReference type="InterPro" id="IPR023459">
    <property type="entry name" value="Tscrpt_elong_fac_GreA/B_fam"/>
</dbReference>
<dbReference type="InterPro" id="IPR022691">
    <property type="entry name" value="Tscrpt_elong_fac_GreA/B_N"/>
</dbReference>
<dbReference type="InterPro" id="IPR036805">
    <property type="entry name" value="Tscrpt_elong_fac_GreA/B_N_sf"/>
</dbReference>
<dbReference type="NCBIfam" id="TIGR01462">
    <property type="entry name" value="greA"/>
    <property type="match status" value="1"/>
</dbReference>
<dbReference type="NCBIfam" id="NF001261">
    <property type="entry name" value="PRK00226.1-2"/>
    <property type="match status" value="1"/>
</dbReference>
<dbReference type="NCBIfam" id="NF001263">
    <property type="entry name" value="PRK00226.1-4"/>
    <property type="match status" value="1"/>
</dbReference>
<dbReference type="NCBIfam" id="NF001264">
    <property type="entry name" value="PRK00226.1-5"/>
    <property type="match status" value="1"/>
</dbReference>
<dbReference type="PANTHER" id="PTHR30437">
    <property type="entry name" value="TRANSCRIPTION ELONGATION FACTOR GREA"/>
    <property type="match status" value="1"/>
</dbReference>
<dbReference type="PANTHER" id="PTHR30437:SF4">
    <property type="entry name" value="TRANSCRIPTION ELONGATION FACTOR GREA"/>
    <property type="match status" value="1"/>
</dbReference>
<dbReference type="Pfam" id="PF01272">
    <property type="entry name" value="GreA_GreB"/>
    <property type="match status" value="1"/>
</dbReference>
<dbReference type="Pfam" id="PF03449">
    <property type="entry name" value="GreA_GreB_N"/>
    <property type="match status" value="1"/>
</dbReference>
<dbReference type="PIRSF" id="PIRSF006092">
    <property type="entry name" value="GreA_GreB"/>
    <property type="match status" value="1"/>
</dbReference>
<dbReference type="SUPFAM" id="SSF54534">
    <property type="entry name" value="FKBP-like"/>
    <property type="match status" value="1"/>
</dbReference>
<dbReference type="SUPFAM" id="SSF46557">
    <property type="entry name" value="GreA transcript cleavage protein, N-terminal domain"/>
    <property type="match status" value="1"/>
</dbReference>
<dbReference type="PROSITE" id="PS00829">
    <property type="entry name" value="GREAB_1"/>
    <property type="match status" value="1"/>
</dbReference>